<gene>
    <name type="primary">H1-II</name>
</gene>
<accession>Q08865</accession>
<sequence length="241" mass="25204">MASDAPEVKAPKAKTQKKPKTAPTHPPYIQMVTDAILSLKERDGSSLPALKKFIEAKYGKDIHDKKFPKTLSLALKTFVKNGKLVKVKNSYKLSDAQKSKAKAAAKPKAAPKKAAAPKKAAAPKKAKAPKKEGEKKAVKPKSEKKAAKPKTEKKPKAAKKPKAAKKPAAKKPAAKKPAAKKATPKKAAAPKKAAAPKKAKAATPKKAKAATPKKAKAAAKPKAAAKPKAAAKPKAKAAKKA</sequence>
<name>H12_VOLCA</name>
<comment type="function">
    <text>Histones H1 are necessary for the condensation of nucleosome chains into higher-order structures.</text>
</comment>
<comment type="subcellular location">
    <subcellularLocation>
        <location>Nucleus</location>
    </subcellularLocation>
    <subcellularLocation>
        <location>Chromosome</location>
    </subcellularLocation>
</comment>
<comment type="developmental stage">
    <text>Expression is restricted to embryogenesis.</text>
</comment>
<comment type="similarity">
    <text evidence="3">Belongs to the histone H1/H5 family.</text>
</comment>
<feature type="initiator methionine" description="Removed" evidence="1">
    <location>
        <position position="1"/>
    </location>
</feature>
<feature type="chain" id="PRO_0000195957" description="Histone H1-II">
    <location>
        <begin position="2"/>
        <end position="241"/>
    </location>
</feature>
<feature type="domain" description="H15" evidence="3">
    <location>
        <begin position="24"/>
        <end position="95"/>
    </location>
</feature>
<feature type="repeat" description="1">
    <location>
        <begin position="111"/>
        <end position="116"/>
    </location>
</feature>
<feature type="repeat" description="2">
    <location>
        <begin position="117"/>
        <end position="122"/>
    </location>
</feature>
<feature type="repeat" description="3">
    <location>
        <begin position="123"/>
        <end position="128"/>
    </location>
</feature>
<feature type="repeat" description="4">
    <location>
        <begin position="184"/>
        <end position="189"/>
    </location>
</feature>
<feature type="repeat" description="5">
    <location>
        <begin position="190"/>
        <end position="195"/>
    </location>
</feature>
<feature type="repeat" description="6">
    <location>
        <begin position="196"/>
        <end position="201"/>
    </location>
</feature>
<feature type="repeat" description="7">
    <location>
        <begin position="204"/>
        <end position="209"/>
    </location>
</feature>
<feature type="repeat" description="8">
    <location>
        <begin position="212"/>
        <end position="217"/>
    </location>
</feature>
<feature type="DNA-binding region" evidence="2">
    <location>
        <begin position="183"/>
        <end position="186"/>
    </location>
</feature>
<feature type="DNA-binding region" evidence="2">
    <location>
        <begin position="203"/>
        <end position="206"/>
    </location>
</feature>
<feature type="DNA-binding region" evidence="2">
    <location>
        <begin position="211"/>
        <end position="214"/>
    </location>
</feature>
<feature type="region of interest" description="Disordered" evidence="4">
    <location>
        <begin position="1"/>
        <end position="27"/>
    </location>
</feature>
<feature type="region of interest" description="Disordered" evidence="4">
    <location>
        <begin position="89"/>
        <end position="241"/>
    </location>
</feature>
<feature type="region of interest" description="8 X 6 AA repeats of P-K-K-A-[AK]-A">
    <location>
        <begin position="111"/>
        <end position="217"/>
    </location>
</feature>
<feature type="compositionally biased region" description="Basic and acidic residues" evidence="4">
    <location>
        <begin position="1"/>
        <end position="10"/>
    </location>
</feature>
<feature type="compositionally biased region" description="Basic residues" evidence="4">
    <location>
        <begin position="11"/>
        <end position="20"/>
    </location>
</feature>
<feature type="compositionally biased region" description="Basic residues" evidence="4">
    <location>
        <begin position="99"/>
        <end position="111"/>
    </location>
</feature>
<feature type="compositionally biased region" description="Basic and acidic residues" evidence="4">
    <location>
        <begin position="129"/>
        <end position="155"/>
    </location>
</feature>
<feature type="compositionally biased region" description="Basic residues" evidence="4">
    <location>
        <begin position="156"/>
        <end position="184"/>
    </location>
</feature>
<feature type="compositionally biased region" description="Basic residues" evidence="4">
    <location>
        <begin position="194"/>
        <end position="241"/>
    </location>
</feature>
<evidence type="ECO:0000250" key="1"/>
<evidence type="ECO:0000255" key="2"/>
<evidence type="ECO:0000255" key="3">
    <source>
        <dbReference type="PROSITE-ProRule" id="PRU00837"/>
    </source>
</evidence>
<evidence type="ECO:0000256" key="4">
    <source>
        <dbReference type="SAM" id="MobiDB-lite"/>
    </source>
</evidence>
<reference key="1">
    <citation type="journal article" date="1993" name="Gene">
        <title>Two histone H1-encoding genes of the green alga Volvox carteri with features intermediate between plant and animal genes.</title>
        <authorList>
            <person name="Lindauer A."/>
            <person name="Mueller K."/>
            <person name="Schmitt R."/>
        </authorList>
    </citation>
    <scope>NUCLEOTIDE SEQUENCE [GENOMIC DNA]</scope>
    <source>
        <strain>f. Nagariensis / HK10</strain>
    </source>
</reference>
<organism>
    <name type="scientific">Volvox carteri</name>
    <name type="common">Green alga</name>
    <dbReference type="NCBI Taxonomy" id="3067"/>
    <lineage>
        <taxon>Eukaryota</taxon>
        <taxon>Viridiplantae</taxon>
        <taxon>Chlorophyta</taxon>
        <taxon>core chlorophytes</taxon>
        <taxon>Chlorophyceae</taxon>
        <taxon>CS clade</taxon>
        <taxon>Chlamydomonadales</taxon>
        <taxon>Volvocaceae</taxon>
        <taxon>Volvox</taxon>
    </lineage>
</organism>
<protein>
    <recommendedName>
        <fullName>Histone H1-II</fullName>
    </recommendedName>
</protein>
<keyword id="KW-0158">Chromosome</keyword>
<keyword id="KW-0238">DNA-binding</keyword>
<keyword id="KW-0539">Nucleus</keyword>
<keyword id="KW-0677">Repeat</keyword>
<dbReference type="EMBL" id="L07947">
    <property type="protein sequence ID" value="AAA34246.1"/>
    <property type="molecule type" value="Genomic_DNA"/>
</dbReference>
<dbReference type="PIR" id="JN0748">
    <property type="entry name" value="JN0748"/>
</dbReference>
<dbReference type="SMR" id="Q08865"/>
<dbReference type="KEGG" id="vcn:VOLCADRAFT_102808"/>
<dbReference type="OMA" id="YFEMIVE"/>
<dbReference type="GO" id="GO:0000786">
    <property type="term" value="C:nucleosome"/>
    <property type="evidence" value="ECO:0007669"/>
    <property type="project" value="InterPro"/>
</dbReference>
<dbReference type="GO" id="GO:0005634">
    <property type="term" value="C:nucleus"/>
    <property type="evidence" value="ECO:0007669"/>
    <property type="project" value="UniProtKB-SubCell"/>
</dbReference>
<dbReference type="GO" id="GO:0003690">
    <property type="term" value="F:double-stranded DNA binding"/>
    <property type="evidence" value="ECO:0007669"/>
    <property type="project" value="TreeGrafter"/>
</dbReference>
<dbReference type="GO" id="GO:0031492">
    <property type="term" value="F:nucleosomal DNA binding"/>
    <property type="evidence" value="ECO:0007669"/>
    <property type="project" value="TreeGrafter"/>
</dbReference>
<dbReference type="GO" id="GO:0030527">
    <property type="term" value="F:structural constituent of chromatin"/>
    <property type="evidence" value="ECO:0007669"/>
    <property type="project" value="InterPro"/>
</dbReference>
<dbReference type="GO" id="GO:0030261">
    <property type="term" value="P:chromosome condensation"/>
    <property type="evidence" value="ECO:0007669"/>
    <property type="project" value="TreeGrafter"/>
</dbReference>
<dbReference type="GO" id="GO:0045910">
    <property type="term" value="P:negative regulation of DNA recombination"/>
    <property type="evidence" value="ECO:0007669"/>
    <property type="project" value="TreeGrafter"/>
</dbReference>
<dbReference type="GO" id="GO:0006334">
    <property type="term" value="P:nucleosome assembly"/>
    <property type="evidence" value="ECO:0007669"/>
    <property type="project" value="InterPro"/>
</dbReference>
<dbReference type="CDD" id="cd00073">
    <property type="entry name" value="H15"/>
    <property type="match status" value="1"/>
</dbReference>
<dbReference type="FunFam" id="1.10.10.10:FF:000493">
    <property type="entry name" value="HMG-Y-related protein A"/>
    <property type="match status" value="1"/>
</dbReference>
<dbReference type="Gene3D" id="1.10.10.10">
    <property type="entry name" value="Winged helix-like DNA-binding domain superfamily/Winged helix DNA-binding domain"/>
    <property type="match status" value="1"/>
</dbReference>
<dbReference type="InterPro" id="IPR005819">
    <property type="entry name" value="H1/H5"/>
</dbReference>
<dbReference type="InterPro" id="IPR005818">
    <property type="entry name" value="Histone_H1/H5_H15"/>
</dbReference>
<dbReference type="InterPro" id="IPR036388">
    <property type="entry name" value="WH-like_DNA-bd_sf"/>
</dbReference>
<dbReference type="InterPro" id="IPR036390">
    <property type="entry name" value="WH_DNA-bd_sf"/>
</dbReference>
<dbReference type="PANTHER" id="PTHR11467:SF36">
    <property type="entry name" value="HISTONE 24-RELATED"/>
    <property type="match status" value="1"/>
</dbReference>
<dbReference type="PANTHER" id="PTHR11467">
    <property type="entry name" value="HISTONE H1"/>
    <property type="match status" value="1"/>
</dbReference>
<dbReference type="Pfam" id="PF00538">
    <property type="entry name" value="Linker_histone"/>
    <property type="match status" value="1"/>
</dbReference>
<dbReference type="PRINTS" id="PR00624">
    <property type="entry name" value="HISTONEH5"/>
</dbReference>
<dbReference type="SMART" id="SM00526">
    <property type="entry name" value="H15"/>
    <property type="match status" value="1"/>
</dbReference>
<dbReference type="SUPFAM" id="SSF46785">
    <property type="entry name" value="Winged helix' DNA-binding domain"/>
    <property type="match status" value="1"/>
</dbReference>
<dbReference type="PROSITE" id="PS51504">
    <property type="entry name" value="H15"/>
    <property type="match status" value="1"/>
</dbReference>
<proteinExistence type="evidence at transcript level"/>